<protein>
    <recommendedName>
        <fullName>U2 snRNP component ist3</fullName>
    </recommendedName>
    <alternativeName>
        <fullName>Complexed with cdc5 protein 29</fullName>
    </alternativeName>
    <alternativeName>
        <fullName>RNA-binding protein cwf29</fullName>
    </alternativeName>
</protein>
<keyword id="KW-0507">mRNA processing</keyword>
<keyword id="KW-0508">mRNA splicing</keyword>
<keyword id="KW-0539">Nucleus</keyword>
<keyword id="KW-0597">Phosphoprotein</keyword>
<keyword id="KW-1185">Reference proteome</keyword>
<keyword id="KW-0694">RNA-binding</keyword>
<keyword id="KW-0747">Spliceosome</keyword>
<dbReference type="EMBL" id="CU329671">
    <property type="protein sequence ID" value="CAA21890.1"/>
    <property type="molecule type" value="Genomic_DNA"/>
</dbReference>
<dbReference type="PIR" id="T40730">
    <property type="entry name" value="T40730"/>
</dbReference>
<dbReference type="RefSeq" id="NP_596479.1">
    <property type="nucleotide sequence ID" value="NM_001022399.2"/>
</dbReference>
<dbReference type="SMR" id="O94290"/>
<dbReference type="BioGRID" id="277726">
    <property type="interactions" value="10"/>
</dbReference>
<dbReference type="FunCoup" id="O94290">
    <property type="interactions" value="179"/>
</dbReference>
<dbReference type="IntAct" id="O94290">
    <property type="interactions" value="2"/>
</dbReference>
<dbReference type="STRING" id="284812.O94290"/>
<dbReference type="iPTMnet" id="O94290"/>
<dbReference type="PaxDb" id="4896-SPBC887.05c.1"/>
<dbReference type="EnsemblFungi" id="SPBC887.05c.1">
    <property type="protein sequence ID" value="SPBC887.05c.1:pep"/>
    <property type="gene ID" value="SPBC887.05c"/>
</dbReference>
<dbReference type="GeneID" id="2541212"/>
<dbReference type="KEGG" id="spo:2541212"/>
<dbReference type="PomBase" id="SPBC887.05c">
    <property type="gene designation" value="cwf29"/>
</dbReference>
<dbReference type="VEuPathDB" id="FungiDB:SPBC887.05c"/>
<dbReference type="eggNOG" id="KOG0126">
    <property type="taxonomic scope" value="Eukaryota"/>
</dbReference>
<dbReference type="HOGENOM" id="CLU_045495_3_2_1"/>
<dbReference type="InParanoid" id="O94290"/>
<dbReference type="OMA" id="PMEQFIK"/>
<dbReference type="PhylomeDB" id="O94290"/>
<dbReference type="PRO" id="PR:O94290"/>
<dbReference type="Proteomes" id="UP000002485">
    <property type="component" value="Chromosome II"/>
</dbReference>
<dbReference type="GO" id="GO:0005634">
    <property type="term" value="C:nucleus"/>
    <property type="evidence" value="ECO:0007005"/>
    <property type="project" value="PomBase"/>
</dbReference>
<dbReference type="GO" id="GO:0071011">
    <property type="term" value="C:precatalytic spliceosome"/>
    <property type="evidence" value="ECO:0000318"/>
    <property type="project" value="GO_Central"/>
</dbReference>
<dbReference type="GO" id="GO:0005686">
    <property type="term" value="C:U2 snRNP"/>
    <property type="evidence" value="ECO:0000314"/>
    <property type="project" value="PomBase"/>
</dbReference>
<dbReference type="GO" id="GO:0003723">
    <property type="term" value="F:RNA binding"/>
    <property type="evidence" value="ECO:0007669"/>
    <property type="project" value="UniProtKB-KW"/>
</dbReference>
<dbReference type="GO" id="GO:0045292">
    <property type="term" value="P:mRNA cis splicing, via spliceosome"/>
    <property type="evidence" value="ECO:0000269"/>
    <property type="project" value="PomBase"/>
</dbReference>
<dbReference type="GO" id="GO:0000398">
    <property type="term" value="P:mRNA splicing, via spliceosome"/>
    <property type="evidence" value="ECO:0000318"/>
    <property type="project" value="GO_Central"/>
</dbReference>
<dbReference type="GO" id="GO:1903241">
    <property type="term" value="P:U2-type prespliceosome assembly"/>
    <property type="evidence" value="ECO:0000250"/>
    <property type="project" value="PomBase"/>
</dbReference>
<dbReference type="CDD" id="cd12411">
    <property type="entry name" value="RRM_ist3_like"/>
    <property type="match status" value="1"/>
</dbReference>
<dbReference type="Gene3D" id="3.30.70.330">
    <property type="match status" value="1"/>
</dbReference>
<dbReference type="InterPro" id="IPR012677">
    <property type="entry name" value="Nucleotide-bd_a/b_plait_sf"/>
</dbReference>
<dbReference type="InterPro" id="IPR035979">
    <property type="entry name" value="RBD_domain_sf"/>
</dbReference>
<dbReference type="InterPro" id="IPR051847">
    <property type="entry name" value="RNA_proc/Spliceosome_comp"/>
</dbReference>
<dbReference type="InterPro" id="IPR000504">
    <property type="entry name" value="RRM_dom"/>
</dbReference>
<dbReference type="InterPro" id="IPR045844">
    <property type="entry name" value="RRM_Ist3-like"/>
</dbReference>
<dbReference type="PANTHER" id="PTHR45880">
    <property type="entry name" value="RNA-BINDING MOTIF PROTEIN, X-LINKED 2"/>
    <property type="match status" value="1"/>
</dbReference>
<dbReference type="PANTHER" id="PTHR45880:SF1">
    <property type="entry name" value="RNA-BINDING MOTIF PROTEIN, X-LINKED 2"/>
    <property type="match status" value="1"/>
</dbReference>
<dbReference type="Pfam" id="PF00076">
    <property type="entry name" value="RRM_1"/>
    <property type="match status" value="1"/>
</dbReference>
<dbReference type="SMART" id="SM00360">
    <property type="entry name" value="RRM"/>
    <property type="match status" value="1"/>
</dbReference>
<dbReference type="SUPFAM" id="SSF54928">
    <property type="entry name" value="RNA-binding domain, RBD"/>
    <property type="match status" value="1"/>
</dbReference>
<dbReference type="PROSITE" id="PS50102">
    <property type="entry name" value="RRM"/>
    <property type="match status" value="1"/>
</dbReference>
<name>IST3_SCHPO</name>
<evidence type="ECO:0000250" key="1">
    <source>
        <dbReference type="UniProtKB" id="P40565"/>
    </source>
</evidence>
<evidence type="ECO:0000255" key="2">
    <source>
        <dbReference type="PROSITE-ProRule" id="PRU00176"/>
    </source>
</evidence>
<evidence type="ECO:0000256" key="3">
    <source>
        <dbReference type="SAM" id="MobiDB-lite"/>
    </source>
</evidence>
<evidence type="ECO:0000269" key="4">
    <source>
    </source>
</evidence>
<evidence type="ECO:0000269" key="5">
    <source>
    </source>
</evidence>
<evidence type="ECO:0000269" key="6">
    <source>
    </source>
</evidence>
<evidence type="ECO:0000305" key="7"/>
<evidence type="ECO:0000312" key="8">
    <source>
        <dbReference type="EMBL" id="CAA21890.1"/>
    </source>
</evidence>
<gene>
    <name type="primary">cwf29</name>
    <name evidence="1" type="synonym">ist3</name>
    <name type="ORF">SPBC887.05c</name>
</gene>
<reference evidence="8" key="1">
    <citation type="journal article" date="2002" name="Nature">
        <title>The genome sequence of Schizosaccharomyces pombe.</title>
        <authorList>
            <person name="Wood V."/>
            <person name="Gwilliam R."/>
            <person name="Rajandream M.A."/>
            <person name="Lyne M.H."/>
            <person name="Lyne R."/>
            <person name="Stewart A."/>
            <person name="Sgouros J.G."/>
            <person name="Peat N."/>
            <person name="Hayles J."/>
            <person name="Baker S.G."/>
            <person name="Basham D."/>
            <person name="Bowman S."/>
            <person name="Brooks K."/>
            <person name="Brown D."/>
            <person name="Brown S."/>
            <person name="Chillingworth T."/>
            <person name="Churcher C.M."/>
            <person name="Collins M."/>
            <person name="Connor R."/>
            <person name="Cronin A."/>
            <person name="Davis P."/>
            <person name="Feltwell T."/>
            <person name="Fraser A."/>
            <person name="Gentles S."/>
            <person name="Goble A."/>
            <person name="Hamlin N."/>
            <person name="Harris D.E."/>
            <person name="Hidalgo J."/>
            <person name="Hodgson G."/>
            <person name="Holroyd S."/>
            <person name="Hornsby T."/>
            <person name="Howarth S."/>
            <person name="Huckle E.J."/>
            <person name="Hunt S."/>
            <person name="Jagels K."/>
            <person name="James K.D."/>
            <person name="Jones L."/>
            <person name="Jones M."/>
            <person name="Leather S."/>
            <person name="McDonald S."/>
            <person name="McLean J."/>
            <person name="Mooney P."/>
            <person name="Moule S."/>
            <person name="Mungall K.L."/>
            <person name="Murphy L.D."/>
            <person name="Niblett D."/>
            <person name="Odell C."/>
            <person name="Oliver K."/>
            <person name="O'Neil S."/>
            <person name="Pearson D."/>
            <person name="Quail M.A."/>
            <person name="Rabbinowitsch E."/>
            <person name="Rutherford K.M."/>
            <person name="Rutter S."/>
            <person name="Saunders D."/>
            <person name="Seeger K."/>
            <person name="Sharp S."/>
            <person name="Skelton J."/>
            <person name="Simmonds M.N."/>
            <person name="Squares R."/>
            <person name="Squares S."/>
            <person name="Stevens K."/>
            <person name="Taylor K."/>
            <person name="Taylor R.G."/>
            <person name="Tivey A."/>
            <person name="Walsh S.V."/>
            <person name="Warren T."/>
            <person name="Whitehead S."/>
            <person name="Woodward J.R."/>
            <person name="Volckaert G."/>
            <person name="Aert R."/>
            <person name="Robben J."/>
            <person name="Grymonprez B."/>
            <person name="Weltjens I."/>
            <person name="Vanstreels E."/>
            <person name="Rieger M."/>
            <person name="Schaefer M."/>
            <person name="Mueller-Auer S."/>
            <person name="Gabel C."/>
            <person name="Fuchs M."/>
            <person name="Duesterhoeft A."/>
            <person name="Fritzc C."/>
            <person name="Holzer E."/>
            <person name="Moestl D."/>
            <person name="Hilbert H."/>
            <person name="Borzym K."/>
            <person name="Langer I."/>
            <person name="Beck A."/>
            <person name="Lehrach H."/>
            <person name="Reinhardt R."/>
            <person name="Pohl T.M."/>
            <person name="Eger P."/>
            <person name="Zimmermann W."/>
            <person name="Wedler H."/>
            <person name="Wambutt R."/>
            <person name="Purnelle B."/>
            <person name="Goffeau A."/>
            <person name="Cadieu E."/>
            <person name="Dreano S."/>
            <person name="Gloux S."/>
            <person name="Lelaure V."/>
            <person name="Mottier S."/>
            <person name="Galibert F."/>
            <person name="Aves S.J."/>
            <person name="Xiang Z."/>
            <person name="Hunt C."/>
            <person name="Moore K."/>
            <person name="Hurst S.M."/>
            <person name="Lucas M."/>
            <person name="Rochet M."/>
            <person name="Gaillardin C."/>
            <person name="Tallada V.A."/>
            <person name="Garzon A."/>
            <person name="Thode G."/>
            <person name="Daga R.R."/>
            <person name="Cruzado L."/>
            <person name="Jimenez J."/>
            <person name="Sanchez M."/>
            <person name="del Rey F."/>
            <person name="Benito J."/>
            <person name="Dominguez A."/>
            <person name="Revuelta J.L."/>
            <person name="Moreno S."/>
            <person name="Armstrong J."/>
            <person name="Forsburg S.L."/>
            <person name="Cerutti L."/>
            <person name="Lowe T."/>
            <person name="McCombie W.R."/>
            <person name="Paulsen I."/>
            <person name="Potashkin J."/>
            <person name="Shpakovski G.V."/>
            <person name="Ussery D."/>
            <person name="Barrell B.G."/>
            <person name="Nurse P."/>
        </authorList>
    </citation>
    <scope>NUCLEOTIDE SEQUENCE [LARGE SCALE GENOMIC DNA]</scope>
    <source>
        <strain>972 / ATCC 24843</strain>
    </source>
</reference>
<reference evidence="7" key="2">
    <citation type="journal article" date="2002" name="Mol. Cell. Biol.">
        <title>Proteomics analysis reveals stable multiprotein complexes in both fission and budding yeasts containing Myb-related Cdc5p/Cef1p, novel pre-mRNA splicing factors, and snRNAs.</title>
        <authorList>
            <person name="Ohi M.D."/>
            <person name="Link A.J."/>
            <person name="Ren L."/>
            <person name="Jennings J.L."/>
            <person name="McDonald W.H."/>
            <person name="Gould K.L."/>
        </authorList>
    </citation>
    <scope>IDENTIFICATION IN THE CWF COMPLEX</scope>
    <scope>IDENTIFICATION BY MASS SPECTROMETRY</scope>
</reference>
<reference evidence="7" key="3">
    <citation type="journal article" date="2006" name="Nat. Biotechnol.">
        <title>ORFeome cloning and global analysis of protein localization in the fission yeast Schizosaccharomyces pombe.</title>
        <authorList>
            <person name="Matsuyama A."/>
            <person name="Arai R."/>
            <person name="Yashiroda Y."/>
            <person name="Shirai A."/>
            <person name="Kamata A."/>
            <person name="Sekido S."/>
            <person name="Kobayashi Y."/>
            <person name="Hashimoto A."/>
            <person name="Hamamoto M."/>
            <person name="Hiraoka Y."/>
            <person name="Horinouchi S."/>
            <person name="Yoshida M."/>
        </authorList>
    </citation>
    <scope>SUBCELLULAR LOCATION [LARGE SCALE ANALYSIS]</scope>
</reference>
<reference evidence="7" key="4">
    <citation type="journal article" date="2008" name="J. Proteome Res.">
        <title>Phosphoproteome analysis of fission yeast.</title>
        <authorList>
            <person name="Wilson-Grady J.T."/>
            <person name="Villen J."/>
            <person name="Gygi S.P."/>
        </authorList>
    </citation>
    <scope>PHOSPHORYLATION [LARGE SCALE ANALYSIS] AT SER-160</scope>
    <scope>IDENTIFICATION BY MASS SPECTROMETRY</scope>
</reference>
<proteinExistence type="evidence at protein level"/>
<organism>
    <name type="scientific">Schizosaccharomyces pombe (strain 972 / ATCC 24843)</name>
    <name type="common">Fission yeast</name>
    <dbReference type="NCBI Taxonomy" id="284812"/>
    <lineage>
        <taxon>Eukaryota</taxon>
        <taxon>Fungi</taxon>
        <taxon>Dikarya</taxon>
        <taxon>Ascomycota</taxon>
        <taxon>Taphrinomycotina</taxon>
        <taxon>Schizosaccharomycetes</taxon>
        <taxon>Schizosaccharomycetales</taxon>
        <taxon>Schizosaccharomycetaceae</taxon>
        <taxon>Schizosaccharomyces</taxon>
    </lineage>
</organism>
<comment type="function">
    <text evidence="1">Required for pre-mRNA splicing and spliceosome assembly.</text>
</comment>
<comment type="subunit">
    <text evidence="4">Belongs to the 40S cdc5-associated complex (or cwf complex), a spliceosome sub-complex reminiscent of a late-stage spliceosome composed of the U2, U5 and U6 snRNAs and at least brr2, cdc5, cwf2/prp3, cwf3/syf1, cwf4/syf3, cwf5/ecm2, spp42/cwf6, cwf7/spf27, cwf8, cwf9, cwf10, cwf11, cwf12, prp45/cwf13, cwf14, cwf15, cwf16, cwf17, cwf18, cwf19, cwf20, cwf21, cwf22, cwf23, cwf24, cwf25, cwf26, cyp7/cwf27, cwf28, cwf29/ist3, lea1, msl1, prp5/cwf1, prp10, prp12/sap130, prp17, prp22, sap61, sap62, sap114, sap145, slu7, smb1, smd1, smd3, smf1, smg1 and syf2.</text>
</comment>
<comment type="subcellular location">
    <subcellularLocation>
        <location evidence="5">Nucleus</location>
    </subcellularLocation>
</comment>
<comment type="similarity">
    <text evidence="7">Belongs to the IST3 family.</text>
</comment>
<sequence length="217" mass="25310">MNSIRQIERLNEQELDKPFSSSWHQDYSDSAYIYIGNLDFDLNEDDILCVFSEFGEPVDINLVRDKETGKSKGFAFLKYEDQRSTVLAVDNMTNVKLLDRLVRVDHVASYKVPQKEKEPANLVPLGESGSSLSVSTINTSNLPDHDYKTIIQNEVEQTLSPKDEKDLLDPMRDYIHREKRRKLKHESSDRSDKSDSNRHSRHHRRHSRSRRHRDLDG</sequence>
<feature type="chain" id="PRO_0000342366" description="U2 snRNP component ist3">
    <location>
        <begin position="1"/>
        <end position="217"/>
    </location>
</feature>
<feature type="domain" description="RRM" evidence="2">
    <location>
        <begin position="31"/>
        <end position="109"/>
    </location>
</feature>
<feature type="region of interest" description="Disordered" evidence="3">
    <location>
        <begin position="119"/>
        <end position="138"/>
    </location>
</feature>
<feature type="region of interest" description="Disordered" evidence="3">
    <location>
        <begin position="154"/>
        <end position="217"/>
    </location>
</feature>
<feature type="compositionally biased region" description="Polar residues" evidence="3">
    <location>
        <begin position="128"/>
        <end position="138"/>
    </location>
</feature>
<feature type="compositionally biased region" description="Basic and acidic residues" evidence="3">
    <location>
        <begin position="161"/>
        <end position="176"/>
    </location>
</feature>
<feature type="compositionally biased region" description="Basic and acidic residues" evidence="3">
    <location>
        <begin position="185"/>
        <end position="198"/>
    </location>
</feature>
<feature type="compositionally biased region" description="Basic residues" evidence="3">
    <location>
        <begin position="199"/>
        <end position="217"/>
    </location>
</feature>
<feature type="modified residue" description="Phosphoserine" evidence="6">
    <location>
        <position position="160"/>
    </location>
</feature>
<accession>O94290</accession>